<feature type="chain" id="PRO_0000206934" description="Exodeoxyribonuclease 7 small subunit">
    <location>
        <begin position="1"/>
        <end position="72"/>
    </location>
</feature>
<sequence length="72" mass="8342">MTKKAKNVEKVPFEDAMKRLEEIIDLMNQPTTALEASLALYEEADQLMRICESRIQEVEARIKQLSDQRSES</sequence>
<proteinExistence type="inferred from homology"/>
<protein>
    <recommendedName>
        <fullName evidence="1">Exodeoxyribonuclease 7 small subunit</fullName>
        <ecNumber evidence="1">3.1.11.6</ecNumber>
    </recommendedName>
    <alternativeName>
        <fullName evidence="1">Exodeoxyribonuclease VII small subunit</fullName>
        <shortName evidence="1">Exonuclease VII small subunit</shortName>
    </alternativeName>
</protein>
<reference key="1">
    <citation type="journal article" date="2000" name="Nucleic Acids Res.">
        <title>Genome sequences of Chlamydia trachomatis MoPn and Chlamydia pneumoniae AR39.</title>
        <authorList>
            <person name="Read T.D."/>
            <person name="Brunham R.C."/>
            <person name="Shen C."/>
            <person name="Gill S.R."/>
            <person name="Heidelberg J.F."/>
            <person name="White O."/>
            <person name="Hickey E.K."/>
            <person name="Peterson J.D."/>
            <person name="Utterback T.R."/>
            <person name="Berry K.J."/>
            <person name="Bass S."/>
            <person name="Linher K.D."/>
            <person name="Weidman J.F."/>
            <person name="Khouri H.M."/>
            <person name="Craven B."/>
            <person name="Bowman C."/>
            <person name="Dodson R.J."/>
            <person name="Gwinn M.L."/>
            <person name="Nelson W.C."/>
            <person name="DeBoy R.T."/>
            <person name="Kolonay J.F."/>
            <person name="McClarty G."/>
            <person name="Salzberg S.L."/>
            <person name="Eisen J.A."/>
            <person name="Fraser C.M."/>
        </authorList>
    </citation>
    <scope>NUCLEOTIDE SEQUENCE [LARGE SCALE GENOMIC DNA]</scope>
    <source>
        <strain>MoPn / Nigg</strain>
    </source>
</reference>
<evidence type="ECO:0000255" key="1">
    <source>
        <dbReference type="HAMAP-Rule" id="MF_00337"/>
    </source>
</evidence>
<evidence type="ECO:0000305" key="2"/>
<gene>
    <name evidence="1" type="primary">xseB</name>
    <name type="ordered locus">TC_0606</name>
</gene>
<keyword id="KW-0963">Cytoplasm</keyword>
<keyword id="KW-0269">Exonuclease</keyword>
<keyword id="KW-0378">Hydrolase</keyword>
<keyword id="KW-0540">Nuclease</keyword>
<comment type="function">
    <text evidence="1">Bidirectionally degrades single-stranded DNA into large acid-insoluble oligonucleotides, which are then degraded further into small acid-soluble oligonucleotides.</text>
</comment>
<comment type="catalytic activity">
    <reaction evidence="1">
        <text>Exonucleolytic cleavage in either 5'- to 3'- or 3'- to 5'-direction to yield nucleoside 5'-phosphates.</text>
        <dbReference type="EC" id="3.1.11.6"/>
    </reaction>
</comment>
<comment type="subunit">
    <text evidence="1">Heterooligomer composed of large and small subunits.</text>
</comment>
<comment type="subcellular location">
    <subcellularLocation>
        <location evidence="1">Cytoplasm</location>
    </subcellularLocation>
</comment>
<comment type="similarity">
    <text evidence="1 2">Belongs to the XseB family.</text>
</comment>
<accession>Q9PK64</accession>
<dbReference type="EC" id="3.1.11.6" evidence="1"/>
<dbReference type="EMBL" id="AE002160">
    <property type="protein sequence ID" value="AAF39437.1"/>
    <property type="molecule type" value="Genomic_DNA"/>
</dbReference>
<dbReference type="PIR" id="C81684">
    <property type="entry name" value="C81684"/>
</dbReference>
<dbReference type="RefSeq" id="WP_010230968.1">
    <property type="nucleotide sequence ID" value="NZ_CP063055.1"/>
</dbReference>
<dbReference type="SMR" id="Q9PK64"/>
<dbReference type="GeneID" id="1245968"/>
<dbReference type="KEGG" id="cmu:TC_0606"/>
<dbReference type="eggNOG" id="COG1722">
    <property type="taxonomic scope" value="Bacteria"/>
</dbReference>
<dbReference type="HOGENOM" id="CLU_145918_3_4_0"/>
<dbReference type="OrthoDB" id="21553at2"/>
<dbReference type="Proteomes" id="UP000000800">
    <property type="component" value="Chromosome"/>
</dbReference>
<dbReference type="GO" id="GO:0005829">
    <property type="term" value="C:cytosol"/>
    <property type="evidence" value="ECO:0007669"/>
    <property type="project" value="TreeGrafter"/>
</dbReference>
<dbReference type="GO" id="GO:0009318">
    <property type="term" value="C:exodeoxyribonuclease VII complex"/>
    <property type="evidence" value="ECO:0007669"/>
    <property type="project" value="InterPro"/>
</dbReference>
<dbReference type="GO" id="GO:0008855">
    <property type="term" value="F:exodeoxyribonuclease VII activity"/>
    <property type="evidence" value="ECO:0007669"/>
    <property type="project" value="UniProtKB-UniRule"/>
</dbReference>
<dbReference type="GO" id="GO:0006308">
    <property type="term" value="P:DNA catabolic process"/>
    <property type="evidence" value="ECO:0007669"/>
    <property type="project" value="UniProtKB-UniRule"/>
</dbReference>
<dbReference type="FunFam" id="1.10.287.1040:FF:000013">
    <property type="entry name" value="Exodeoxyribonuclease 7 small subunit"/>
    <property type="match status" value="1"/>
</dbReference>
<dbReference type="Gene3D" id="1.10.287.1040">
    <property type="entry name" value="Exonuclease VII, small subunit"/>
    <property type="match status" value="1"/>
</dbReference>
<dbReference type="HAMAP" id="MF_00337">
    <property type="entry name" value="Exonuc_7_S"/>
    <property type="match status" value="1"/>
</dbReference>
<dbReference type="InterPro" id="IPR003761">
    <property type="entry name" value="Exonuc_VII_S"/>
</dbReference>
<dbReference type="InterPro" id="IPR037004">
    <property type="entry name" value="Exonuc_VII_ssu_sf"/>
</dbReference>
<dbReference type="NCBIfam" id="NF002140">
    <property type="entry name" value="PRK00977.1-4"/>
    <property type="match status" value="1"/>
</dbReference>
<dbReference type="NCBIfam" id="TIGR01280">
    <property type="entry name" value="xseB"/>
    <property type="match status" value="1"/>
</dbReference>
<dbReference type="PANTHER" id="PTHR34137">
    <property type="entry name" value="EXODEOXYRIBONUCLEASE 7 SMALL SUBUNIT"/>
    <property type="match status" value="1"/>
</dbReference>
<dbReference type="PANTHER" id="PTHR34137:SF1">
    <property type="entry name" value="EXODEOXYRIBONUCLEASE 7 SMALL SUBUNIT"/>
    <property type="match status" value="1"/>
</dbReference>
<dbReference type="Pfam" id="PF02609">
    <property type="entry name" value="Exonuc_VII_S"/>
    <property type="match status" value="1"/>
</dbReference>
<dbReference type="PIRSF" id="PIRSF006488">
    <property type="entry name" value="Exonuc_VII_S"/>
    <property type="match status" value="1"/>
</dbReference>
<dbReference type="SUPFAM" id="SSF116842">
    <property type="entry name" value="XseB-like"/>
    <property type="match status" value="1"/>
</dbReference>
<organism>
    <name type="scientific">Chlamydia muridarum (strain MoPn / Nigg)</name>
    <dbReference type="NCBI Taxonomy" id="243161"/>
    <lineage>
        <taxon>Bacteria</taxon>
        <taxon>Pseudomonadati</taxon>
        <taxon>Chlamydiota</taxon>
        <taxon>Chlamydiia</taxon>
        <taxon>Chlamydiales</taxon>
        <taxon>Chlamydiaceae</taxon>
        <taxon>Chlamydia/Chlamydophila group</taxon>
        <taxon>Chlamydia</taxon>
    </lineage>
</organism>
<name>EX7S_CHLMU</name>